<evidence type="ECO:0000255" key="1">
    <source>
        <dbReference type="HAMAP-Rule" id="MF_01856"/>
    </source>
</evidence>
<sequence>MKKQRNLRSMAAQAIEQVVEQGQSLSNILPPLQQKVSDKDKALLQELCFGVLRTLSQLDWLINKLMARPMTGKQRTVHYLIMVGLYQLLYTRIPPHAALAETVEGAVAIKRPQLKGLINGVLRQFQRQQDELLAEFNASDARYLHPSWLLKRLQKAYPEQWQSIVEANNQRPPMWLRVNRTHHSRDSWLALLDEAGMKGFPHADYPDAVQLETPAPVHALPGFEEGWVTVQDASAQGCMTWLAPQNGEHILDLCAAPGGKTTHILEVAPEAQVLAVDIDEQRLSRVYDNLKRLGMKATVKQGDGRYPSQWCGEQQFDRILLDAPCSATGVIRRHPDIKWLRRDRDIPELAQLQSEILDAIWSHLKSGGTLVYATCSMLPEENSLQIKAFLQRTADAELCETGTPEQPGKQNLPGAEEGDGFFYAKLIKK</sequence>
<name>RSMB_ECOUT</name>
<comment type="function">
    <text evidence="1">Specifically methylates the cytosine at position 967 (m5C967) of 16S rRNA.</text>
</comment>
<comment type="catalytic activity">
    <reaction evidence="1">
        <text>cytidine(967) in 16S rRNA + S-adenosyl-L-methionine = 5-methylcytidine(967) in 16S rRNA + S-adenosyl-L-homocysteine + H(+)</text>
        <dbReference type="Rhea" id="RHEA:42748"/>
        <dbReference type="Rhea" id="RHEA-COMP:10219"/>
        <dbReference type="Rhea" id="RHEA-COMP:10220"/>
        <dbReference type="ChEBI" id="CHEBI:15378"/>
        <dbReference type="ChEBI" id="CHEBI:57856"/>
        <dbReference type="ChEBI" id="CHEBI:59789"/>
        <dbReference type="ChEBI" id="CHEBI:74483"/>
        <dbReference type="ChEBI" id="CHEBI:82748"/>
        <dbReference type="EC" id="2.1.1.176"/>
    </reaction>
</comment>
<comment type="subcellular location">
    <subcellularLocation>
        <location evidence="1">Cytoplasm</location>
    </subcellularLocation>
</comment>
<comment type="similarity">
    <text evidence="1">Belongs to the class I-like SAM-binding methyltransferase superfamily. RsmB/NOP family.</text>
</comment>
<gene>
    <name evidence="1" type="primary">rsmB</name>
    <name evidence="1" type="synonym">sun</name>
    <name type="ordered locus">UTI89_C3733</name>
</gene>
<reference key="1">
    <citation type="journal article" date="2006" name="Proc. Natl. Acad. Sci. U.S.A.">
        <title>Identification of genes subject to positive selection in uropathogenic strains of Escherichia coli: a comparative genomics approach.</title>
        <authorList>
            <person name="Chen S.L."/>
            <person name="Hung C.-S."/>
            <person name="Xu J."/>
            <person name="Reigstad C.S."/>
            <person name="Magrini V."/>
            <person name="Sabo A."/>
            <person name="Blasiar D."/>
            <person name="Bieri T."/>
            <person name="Meyer R.R."/>
            <person name="Ozersky P."/>
            <person name="Armstrong J.R."/>
            <person name="Fulton R.S."/>
            <person name="Latreille J.P."/>
            <person name="Spieth J."/>
            <person name="Hooton T.M."/>
            <person name="Mardis E.R."/>
            <person name="Hultgren S.J."/>
            <person name="Gordon J.I."/>
        </authorList>
    </citation>
    <scope>NUCLEOTIDE SEQUENCE [LARGE SCALE GENOMIC DNA]</scope>
    <source>
        <strain>UTI89 / UPEC</strain>
    </source>
</reference>
<proteinExistence type="inferred from homology"/>
<organism>
    <name type="scientific">Escherichia coli (strain UTI89 / UPEC)</name>
    <dbReference type="NCBI Taxonomy" id="364106"/>
    <lineage>
        <taxon>Bacteria</taxon>
        <taxon>Pseudomonadati</taxon>
        <taxon>Pseudomonadota</taxon>
        <taxon>Gammaproteobacteria</taxon>
        <taxon>Enterobacterales</taxon>
        <taxon>Enterobacteriaceae</taxon>
        <taxon>Escherichia</taxon>
    </lineage>
</organism>
<protein>
    <recommendedName>
        <fullName evidence="1">Ribosomal RNA small subunit methyltransferase B</fullName>
        <ecNumber evidence="1">2.1.1.176</ecNumber>
    </recommendedName>
    <alternativeName>
        <fullName evidence="1">16S rRNA m5C967 methyltransferase</fullName>
    </alternativeName>
    <alternativeName>
        <fullName evidence="1">rRNA (cytosine-C(5)-)-methyltransferase RsmB</fullName>
    </alternativeName>
</protein>
<keyword id="KW-0963">Cytoplasm</keyword>
<keyword id="KW-0489">Methyltransferase</keyword>
<keyword id="KW-0694">RNA-binding</keyword>
<keyword id="KW-0698">rRNA processing</keyword>
<keyword id="KW-0949">S-adenosyl-L-methionine</keyword>
<keyword id="KW-0808">Transferase</keyword>
<accession>Q1R644</accession>
<dbReference type="EC" id="2.1.1.176" evidence="1"/>
<dbReference type="EMBL" id="CP000243">
    <property type="protein sequence ID" value="ABE09170.1"/>
    <property type="molecule type" value="Genomic_DNA"/>
</dbReference>
<dbReference type="RefSeq" id="WP_000744766.1">
    <property type="nucleotide sequence ID" value="NZ_CP064825.1"/>
</dbReference>
<dbReference type="SMR" id="Q1R644"/>
<dbReference type="KEGG" id="eci:UTI89_C3733"/>
<dbReference type="HOGENOM" id="CLU_005316_0_4_6"/>
<dbReference type="Proteomes" id="UP000001952">
    <property type="component" value="Chromosome"/>
</dbReference>
<dbReference type="GO" id="GO:0005829">
    <property type="term" value="C:cytosol"/>
    <property type="evidence" value="ECO:0007669"/>
    <property type="project" value="TreeGrafter"/>
</dbReference>
<dbReference type="GO" id="GO:0003723">
    <property type="term" value="F:RNA binding"/>
    <property type="evidence" value="ECO:0007669"/>
    <property type="project" value="UniProtKB-KW"/>
</dbReference>
<dbReference type="GO" id="GO:0009383">
    <property type="term" value="F:rRNA (cytosine-C5-)-methyltransferase activity"/>
    <property type="evidence" value="ECO:0007669"/>
    <property type="project" value="TreeGrafter"/>
</dbReference>
<dbReference type="GO" id="GO:0006355">
    <property type="term" value="P:regulation of DNA-templated transcription"/>
    <property type="evidence" value="ECO:0007669"/>
    <property type="project" value="InterPro"/>
</dbReference>
<dbReference type="GO" id="GO:0070475">
    <property type="term" value="P:rRNA base methylation"/>
    <property type="evidence" value="ECO:0007669"/>
    <property type="project" value="TreeGrafter"/>
</dbReference>
<dbReference type="CDD" id="cd02440">
    <property type="entry name" value="AdoMet_MTases"/>
    <property type="match status" value="1"/>
</dbReference>
<dbReference type="CDD" id="cd00620">
    <property type="entry name" value="Methyltransferase_Sun"/>
    <property type="match status" value="1"/>
</dbReference>
<dbReference type="FunFam" id="1.10.287.730:FF:000001">
    <property type="entry name" value="Ribosomal RNA small subunit methyltransferase B"/>
    <property type="match status" value="1"/>
</dbReference>
<dbReference type="FunFam" id="1.10.940.10:FF:000002">
    <property type="entry name" value="Ribosomal RNA small subunit methyltransferase B"/>
    <property type="match status" value="1"/>
</dbReference>
<dbReference type="FunFam" id="3.30.70.1170:FF:000002">
    <property type="entry name" value="Ribosomal RNA small subunit methyltransferase B"/>
    <property type="match status" value="1"/>
</dbReference>
<dbReference type="FunFam" id="3.40.50.150:FF:000022">
    <property type="entry name" value="Ribosomal RNA small subunit methyltransferase B"/>
    <property type="match status" value="1"/>
</dbReference>
<dbReference type="Gene3D" id="1.10.287.730">
    <property type="entry name" value="Helix hairpin bin"/>
    <property type="match status" value="1"/>
</dbReference>
<dbReference type="Gene3D" id="1.10.940.10">
    <property type="entry name" value="NusB-like"/>
    <property type="match status" value="1"/>
</dbReference>
<dbReference type="Gene3D" id="3.30.70.1170">
    <property type="entry name" value="Sun protein, domain 3"/>
    <property type="match status" value="1"/>
</dbReference>
<dbReference type="Gene3D" id="3.40.50.150">
    <property type="entry name" value="Vaccinia Virus protein VP39"/>
    <property type="match status" value="1"/>
</dbReference>
<dbReference type="HAMAP" id="MF_01856">
    <property type="entry name" value="16SrRNA_methyltr_B"/>
    <property type="match status" value="1"/>
</dbReference>
<dbReference type="InterPro" id="IPR049560">
    <property type="entry name" value="MeTrfase_RsmB-F_NOP2_cat"/>
</dbReference>
<dbReference type="InterPro" id="IPR001678">
    <property type="entry name" value="MeTrfase_RsmB-F_NOP2_dom"/>
</dbReference>
<dbReference type="InterPro" id="IPR035926">
    <property type="entry name" value="NusB-like_sf"/>
</dbReference>
<dbReference type="InterPro" id="IPR006027">
    <property type="entry name" value="NusB_RsmB_TIM44"/>
</dbReference>
<dbReference type="InterPro" id="IPR023267">
    <property type="entry name" value="RCMT"/>
</dbReference>
<dbReference type="InterPro" id="IPR004573">
    <property type="entry name" value="rRNA_ssu_MeTfrase_B"/>
</dbReference>
<dbReference type="InterPro" id="IPR023541">
    <property type="entry name" value="rRNA_ssu_MeTfrase_B_ent"/>
</dbReference>
<dbReference type="InterPro" id="IPR054728">
    <property type="entry name" value="RsmB-like_ferredoxin"/>
</dbReference>
<dbReference type="InterPro" id="IPR048019">
    <property type="entry name" value="RsmB-like_N"/>
</dbReference>
<dbReference type="InterPro" id="IPR018314">
    <property type="entry name" value="RsmB/NOL1/NOP2-like_CS"/>
</dbReference>
<dbReference type="InterPro" id="IPR029063">
    <property type="entry name" value="SAM-dependent_MTases_sf"/>
</dbReference>
<dbReference type="NCBIfam" id="NF008149">
    <property type="entry name" value="PRK10901.1"/>
    <property type="match status" value="1"/>
</dbReference>
<dbReference type="NCBIfam" id="NF011494">
    <property type="entry name" value="PRK14902.1"/>
    <property type="match status" value="1"/>
</dbReference>
<dbReference type="NCBIfam" id="TIGR00563">
    <property type="entry name" value="rsmB"/>
    <property type="match status" value="1"/>
</dbReference>
<dbReference type="PANTHER" id="PTHR22807:SF61">
    <property type="entry name" value="NOL1_NOP2_SUN FAMILY PROTEIN _ ANTITERMINATION NUSB DOMAIN-CONTAINING PROTEIN"/>
    <property type="match status" value="1"/>
</dbReference>
<dbReference type="PANTHER" id="PTHR22807">
    <property type="entry name" value="NOP2 YEAST -RELATED NOL1/NOP2/FMU SUN DOMAIN-CONTAINING"/>
    <property type="match status" value="1"/>
</dbReference>
<dbReference type="Pfam" id="PF01189">
    <property type="entry name" value="Methyltr_RsmB-F"/>
    <property type="match status" value="1"/>
</dbReference>
<dbReference type="Pfam" id="PF01029">
    <property type="entry name" value="NusB"/>
    <property type="match status" value="1"/>
</dbReference>
<dbReference type="Pfam" id="PF22458">
    <property type="entry name" value="RsmF-B_ferredox"/>
    <property type="match status" value="1"/>
</dbReference>
<dbReference type="PRINTS" id="PR02008">
    <property type="entry name" value="RCMTFAMILY"/>
</dbReference>
<dbReference type="SUPFAM" id="SSF48013">
    <property type="entry name" value="NusB-like"/>
    <property type="match status" value="1"/>
</dbReference>
<dbReference type="SUPFAM" id="SSF53335">
    <property type="entry name" value="S-adenosyl-L-methionine-dependent methyltransferases"/>
    <property type="match status" value="1"/>
</dbReference>
<dbReference type="PROSITE" id="PS01153">
    <property type="entry name" value="NOL1_NOP2_SUN"/>
    <property type="match status" value="1"/>
</dbReference>
<dbReference type="PROSITE" id="PS51686">
    <property type="entry name" value="SAM_MT_RSMB_NOP"/>
    <property type="match status" value="1"/>
</dbReference>
<feature type="chain" id="PRO_0000366154" description="Ribosomal RNA small subunit methyltransferase B">
    <location>
        <begin position="1"/>
        <end position="429"/>
    </location>
</feature>
<feature type="active site" description="Nucleophile" evidence="1">
    <location>
        <position position="375"/>
    </location>
</feature>
<feature type="binding site" evidence="1">
    <location>
        <begin position="254"/>
        <end position="260"/>
    </location>
    <ligand>
        <name>S-adenosyl-L-methionine</name>
        <dbReference type="ChEBI" id="CHEBI:59789"/>
    </ligand>
</feature>
<feature type="binding site" evidence="1">
    <location>
        <position position="277"/>
    </location>
    <ligand>
        <name>S-adenosyl-L-methionine</name>
        <dbReference type="ChEBI" id="CHEBI:59789"/>
    </ligand>
</feature>
<feature type="binding site" evidence="1">
    <location>
        <position position="303"/>
    </location>
    <ligand>
        <name>S-adenosyl-L-methionine</name>
        <dbReference type="ChEBI" id="CHEBI:59789"/>
    </ligand>
</feature>
<feature type="binding site" evidence="1">
    <location>
        <position position="322"/>
    </location>
    <ligand>
        <name>S-adenosyl-L-methionine</name>
        <dbReference type="ChEBI" id="CHEBI:59789"/>
    </ligand>
</feature>